<sequence>MMIARMETSATAAAATSAPRLRLAKRSLFDPMIVRSALPQSLRKLAPRVQARNPVMLVVLVGAVITTLAFLRDLASSTAQENVFNGLVAAFLWFTVLFANFAEAMAEGRGKAQAAALRKVRSETMANRRTAAGNIESVPSSRLDLDDVVEVSAGETIPSDGEIIEGIASVDESAITGESAPVIRESGGDRSAVTGGTVVLSDRIVVRITAKQGQTFIDRMIALVEGAARQQTPNEIALNILLAGLTIIFLLAVVTLQPFAIYSGGGQRVVVLVALLVCLIPTTIGALLSAIGIAGMDRLVQHNVLATSGRAVEAAGDVNTLLLDKTGTITLGNRQATEFVPINGVSAEAVADAAQLSSLADETPEGRSIVVLAKDEFGLRARDEGVMSHARFVPFTAETRMSGVDLAEVSGIRRIRKGAAAAVMKWVRDHGGHPTEEVGAIVDGISSGGGTPLVVAEWTDNSSARAIGVVHLKDIVKVGIRERFDEMRRMSIRTVMITGDNPATAKAIAQEAGVDDFLAEATPEDKLALIKREQQGGRLVAMTGDGTNDAPALAQADVGVAMNTGTQAAREAGNMVDLDSDPTKLIEVVEIGKQLLITRGALTTFSIANDVAKYFAIIPAMFVGLYPVLDKLNVMALHSPRSAILSAVIFNALVIVALIPLALRGVRFRAESASAMLRRNLLIYGLGGLVVPFIGIKLVDLVIVALGVS</sequence>
<gene>
    <name evidence="1" type="primary">kdpB</name>
    <name type="ordered locus">Rv1030</name>
    <name type="ORF">MTCY10G2.19c</name>
</gene>
<evidence type="ECO:0000255" key="1">
    <source>
        <dbReference type="HAMAP-Rule" id="MF_00285"/>
    </source>
</evidence>
<dbReference type="EC" id="7.2.2.6" evidence="1"/>
<dbReference type="EMBL" id="AL123456">
    <property type="protein sequence ID" value="CCP43781.1"/>
    <property type="molecule type" value="Genomic_DNA"/>
</dbReference>
<dbReference type="PIR" id="A70624">
    <property type="entry name" value="A70624"/>
</dbReference>
<dbReference type="RefSeq" id="NP_215546.1">
    <property type="nucleotide sequence ID" value="NC_000962.3"/>
</dbReference>
<dbReference type="RefSeq" id="WP_003405320.1">
    <property type="nucleotide sequence ID" value="NZ_NVQJ01000018.1"/>
</dbReference>
<dbReference type="SMR" id="P9WPU3"/>
<dbReference type="FunCoup" id="P9WPU3">
    <property type="interactions" value="58"/>
</dbReference>
<dbReference type="STRING" id="83332.Rv1030"/>
<dbReference type="PaxDb" id="83332-Rv1030"/>
<dbReference type="DNASU" id="887343"/>
<dbReference type="GeneID" id="887343"/>
<dbReference type="KEGG" id="mtu:Rv1030"/>
<dbReference type="KEGG" id="mtv:RVBD_1030"/>
<dbReference type="TubercuList" id="Rv1030"/>
<dbReference type="eggNOG" id="COG2216">
    <property type="taxonomic scope" value="Bacteria"/>
</dbReference>
<dbReference type="InParanoid" id="P9WPU3"/>
<dbReference type="OrthoDB" id="9814270at2"/>
<dbReference type="PhylomeDB" id="P9WPU3"/>
<dbReference type="Proteomes" id="UP000001584">
    <property type="component" value="Chromosome"/>
</dbReference>
<dbReference type="GO" id="GO:0005886">
    <property type="term" value="C:plasma membrane"/>
    <property type="evidence" value="ECO:0000318"/>
    <property type="project" value="GO_Central"/>
</dbReference>
<dbReference type="GO" id="GO:0031004">
    <property type="term" value="C:potassium ion-transporting ATPase complex"/>
    <property type="evidence" value="ECO:0000318"/>
    <property type="project" value="GO_Central"/>
</dbReference>
<dbReference type="GO" id="GO:1903103">
    <property type="term" value="C:potassium:proton antiporter complex"/>
    <property type="evidence" value="ECO:0000318"/>
    <property type="project" value="GO_Central"/>
</dbReference>
<dbReference type="GO" id="GO:0005524">
    <property type="term" value="F:ATP binding"/>
    <property type="evidence" value="ECO:0007669"/>
    <property type="project" value="UniProtKB-UniRule"/>
</dbReference>
<dbReference type="GO" id="GO:0016887">
    <property type="term" value="F:ATP hydrolysis activity"/>
    <property type="evidence" value="ECO:0007669"/>
    <property type="project" value="InterPro"/>
</dbReference>
<dbReference type="GO" id="GO:0000287">
    <property type="term" value="F:magnesium ion binding"/>
    <property type="evidence" value="ECO:0007669"/>
    <property type="project" value="UniProtKB-UniRule"/>
</dbReference>
<dbReference type="GO" id="GO:0008556">
    <property type="term" value="F:P-type potassium transmembrane transporter activity"/>
    <property type="evidence" value="ECO:0000318"/>
    <property type="project" value="GO_Central"/>
</dbReference>
<dbReference type="GO" id="GO:0071805">
    <property type="term" value="P:potassium ion transmembrane transport"/>
    <property type="evidence" value="ECO:0000318"/>
    <property type="project" value="GO_Central"/>
</dbReference>
<dbReference type="CDD" id="cd02078">
    <property type="entry name" value="P-type_ATPase_K"/>
    <property type="match status" value="1"/>
</dbReference>
<dbReference type="FunFam" id="2.70.150.10:FF:000033">
    <property type="entry name" value="Potassium-transporting ATPase ATP-binding subunit"/>
    <property type="match status" value="1"/>
</dbReference>
<dbReference type="FunFam" id="3.40.1110.10:FF:000007">
    <property type="entry name" value="Potassium-transporting ATPase ATP-binding subunit"/>
    <property type="match status" value="1"/>
</dbReference>
<dbReference type="Gene3D" id="3.40.1110.10">
    <property type="entry name" value="Calcium-transporting ATPase, cytoplasmic domain N"/>
    <property type="match status" value="1"/>
</dbReference>
<dbReference type="Gene3D" id="2.70.150.10">
    <property type="entry name" value="Calcium-transporting ATPase, cytoplasmic transduction domain A"/>
    <property type="match status" value="1"/>
</dbReference>
<dbReference type="Gene3D" id="3.40.50.1000">
    <property type="entry name" value="HAD superfamily/HAD-like"/>
    <property type="match status" value="1"/>
</dbReference>
<dbReference type="HAMAP" id="MF_00285">
    <property type="entry name" value="KdpB"/>
    <property type="match status" value="1"/>
</dbReference>
<dbReference type="InterPro" id="IPR023299">
    <property type="entry name" value="ATPase_P-typ_cyto_dom_N"/>
</dbReference>
<dbReference type="InterPro" id="IPR018303">
    <property type="entry name" value="ATPase_P-typ_P_site"/>
</dbReference>
<dbReference type="InterPro" id="IPR023298">
    <property type="entry name" value="ATPase_P-typ_TM_dom_sf"/>
</dbReference>
<dbReference type="InterPro" id="IPR008250">
    <property type="entry name" value="ATPase_P-typ_transduc_dom_A_sf"/>
</dbReference>
<dbReference type="InterPro" id="IPR036412">
    <property type="entry name" value="HAD-like_sf"/>
</dbReference>
<dbReference type="InterPro" id="IPR023214">
    <property type="entry name" value="HAD_sf"/>
</dbReference>
<dbReference type="InterPro" id="IPR006391">
    <property type="entry name" value="P-type_ATPase_bsu_IA"/>
</dbReference>
<dbReference type="InterPro" id="IPR001757">
    <property type="entry name" value="P_typ_ATPase"/>
</dbReference>
<dbReference type="InterPro" id="IPR044492">
    <property type="entry name" value="P_typ_ATPase_HD_dom"/>
</dbReference>
<dbReference type="NCBIfam" id="TIGR01494">
    <property type="entry name" value="ATPase_P-type"/>
    <property type="match status" value="2"/>
</dbReference>
<dbReference type="NCBIfam" id="TIGR01497">
    <property type="entry name" value="kdpB"/>
    <property type="match status" value="1"/>
</dbReference>
<dbReference type="PANTHER" id="PTHR43743">
    <property type="entry name" value="POTASSIUM-TRANSPORTING ATPASE ATP-BINDING SUBUNIT"/>
    <property type="match status" value="1"/>
</dbReference>
<dbReference type="PANTHER" id="PTHR43743:SF1">
    <property type="entry name" value="POTASSIUM-TRANSPORTING ATPASE ATP-BINDING SUBUNIT"/>
    <property type="match status" value="1"/>
</dbReference>
<dbReference type="Pfam" id="PF00122">
    <property type="entry name" value="E1-E2_ATPase"/>
    <property type="match status" value="1"/>
</dbReference>
<dbReference type="Pfam" id="PF00702">
    <property type="entry name" value="Hydrolase"/>
    <property type="match status" value="1"/>
</dbReference>
<dbReference type="PRINTS" id="PR00119">
    <property type="entry name" value="CATATPASE"/>
</dbReference>
<dbReference type="SFLD" id="SFLDS00003">
    <property type="entry name" value="Haloacid_Dehalogenase"/>
    <property type="match status" value="1"/>
</dbReference>
<dbReference type="SFLD" id="SFLDF00027">
    <property type="entry name" value="p-type_atpase"/>
    <property type="match status" value="1"/>
</dbReference>
<dbReference type="SUPFAM" id="SSF81653">
    <property type="entry name" value="Calcium ATPase, transduction domain A"/>
    <property type="match status" value="1"/>
</dbReference>
<dbReference type="SUPFAM" id="SSF81665">
    <property type="entry name" value="Calcium ATPase, transmembrane domain M"/>
    <property type="match status" value="1"/>
</dbReference>
<dbReference type="SUPFAM" id="SSF56784">
    <property type="entry name" value="HAD-like"/>
    <property type="match status" value="1"/>
</dbReference>
<dbReference type="PROSITE" id="PS00154">
    <property type="entry name" value="ATPASE_E1_E2"/>
    <property type="match status" value="1"/>
</dbReference>
<accession>P9WPU3</accession>
<accession>L0T5M2</accession>
<accession>P63681</accession>
<accession>P96370</accession>
<proteinExistence type="inferred from homology"/>
<comment type="function">
    <text evidence="1">Part of the high-affinity ATP-driven potassium transport (or Kdp) system, which catalyzes the hydrolysis of ATP coupled with the electrogenic transport of potassium into the cytoplasm. This subunit is responsible for energy coupling to the transport system and for the release of the potassium ions to the cytoplasm.</text>
</comment>
<comment type="catalytic activity">
    <reaction evidence="1">
        <text>K(+)(out) + ATP + H2O = K(+)(in) + ADP + phosphate + H(+)</text>
        <dbReference type="Rhea" id="RHEA:16777"/>
        <dbReference type="ChEBI" id="CHEBI:15377"/>
        <dbReference type="ChEBI" id="CHEBI:15378"/>
        <dbReference type="ChEBI" id="CHEBI:29103"/>
        <dbReference type="ChEBI" id="CHEBI:30616"/>
        <dbReference type="ChEBI" id="CHEBI:43474"/>
        <dbReference type="ChEBI" id="CHEBI:456216"/>
        <dbReference type="EC" id="7.2.2.6"/>
    </reaction>
    <physiologicalReaction direction="left-to-right" evidence="1">
        <dbReference type="Rhea" id="RHEA:16778"/>
    </physiologicalReaction>
</comment>
<comment type="subunit">
    <text evidence="1">The system is composed of three essential subunits: KdpA, KdpB and KdpC.</text>
</comment>
<comment type="subcellular location">
    <subcellularLocation>
        <location evidence="1">Cell membrane</location>
        <topology evidence="1">Multi-pass membrane protein</topology>
    </subcellularLocation>
</comment>
<comment type="similarity">
    <text evidence="1">Belongs to the cation transport ATPase (P-type) (TC 3.A.3) family. Type IA subfamily.</text>
</comment>
<organism>
    <name type="scientific">Mycobacterium tuberculosis (strain ATCC 25618 / H37Rv)</name>
    <dbReference type="NCBI Taxonomy" id="83332"/>
    <lineage>
        <taxon>Bacteria</taxon>
        <taxon>Bacillati</taxon>
        <taxon>Actinomycetota</taxon>
        <taxon>Actinomycetes</taxon>
        <taxon>Mycobacteriales</taxon>
        <taxon>Mycobacteriaceae</taxon>
        <taxon>Mycobacterium</taxon>
        <taxon>Mycobacterium tuberculosis complex</taxon>
    </lineage>
</organism>
<name>KDPB_MYCTU</name>
<reference key="1">
    <citation type="journal article" date="1998" name="Nature">
        <title>Deciphering the biology of Mycobacterium tuberculosis from the complete genome sequence.</title>
        <authorList>
            <person name="Cole S.T."/>
            <person name="Brosch R."/>
            <person name="Parkhill J."/>
            <person name="Garnier T."/>
            <person name="Churcher C.M."/>
            <person name="Harris D.E."/>
            <person name="Gordon S.V."/>
            <person name="Eiglmeier K."/>
            <person name="Gas S."/>
            <person name="Barry C.E. III"/>
            <person name="Tekaia F."/>
            <person name="Badcock K."/>
            <person name="Basham D."/>
            <person name="Brown D."/>
            <person name="Chillingworth T."/>
            <person name="Connor R."/>
            <person name="Davies R.M."/>
            <person name="Devlin K."/>
            <person name="Feltwell T."/>
            <person name="Gentles S."/>
            <person name="Hamlin N."/>
            <person name="Holroyd S."/>
            <person name="Hornsby T."/>
            <person name="Jagels K."/>
            <person name="Krogh A."/>
            <person name="McLean J."/>
            <person name="Moule S."/>
            <person name="Murphy L.D."/>
            <person name="Oliver S."/>
            <person name="Osborne J."/>
            <person name="Quail M.A."/>
            <person name="Rajandream M.A."/>
            <person name="Rogers J."/>
            <person name="Rutter S."/>
            <person name="Seeger K."/>
            <person name="Skelton S."/>
            <person name="Squares S."/>
            <person name="Squares R."/>
            <person name="Sulston J.E."/>
            <person name="Taylor K."/>
            <person name="Whitehead S."/>
            <person name="Barrell B.G."/>
        </authorList>
    </citation>
    <scope>NUCLEOTIDE SEQUENCE [LARGE SCALE GENOMIC DNA]</scope>
    <source>
        <strain>ATCC 25618 / H37Rv</strain>
    </source>
</reference>
<keyword id="KW-0067">ATP-binding</keyword>
<keyword id="KW-1003">Cell membrane</keyword>
<keyword id="KW-0406">Ion transport</keyword>
<keyword id="KW-0460">Magnesium</keyword>
<keyword id="KW-0472">Membrane</keyword>
<keyword id="KW-0479">Metal-binding</keyword>
<keyword id="KW-0547">Nucleotide-binding</keyword>
<keyword id="KW-0597">Phosphoprotein</keyword>
<keyword id="KW-0630">Potassium</keyword>
<keyword id="KW-0633">Potassium transport</keyword>
<keyword id="KW-1185">Reference proteome</keyword>
<keyword id="KW-1278">Translocase</keyword>
<keyword id="KW-0812">Transmembrane</keyword>
<keyword id="KW-1133">Transmembrane helix</keyword>
<keyword id="KW-0813">Transport</keyword>
<protein>
    <recommendedName>
        <fullName evidence="1">Potassium-transporting ATPase ATP-binding subunit</fullName>
        <ecNumber evidence="1">7.2.2.6</ecNumber>
    </recommendedName>
    <alternativeName>
        <fullName evidence="1">ATP phosphohydrolase [potassium-transporting] B chain</fullName>
    </alternativeName>
    <alternativeName>
        <fullName evidence="1">Potassium-binding and translocating subunit B</fullName>
    </alternativeName>
    <alternativeName>
        <fullName evidence="1">Potassium-translocating ATPase B chain</fullName>
    </alternativeName>
</protein>
<feature type="chain" id="PRO_0000046126" description="Potassium-transporting ATPase ATP-binding subunit">
    <location>
        <begin position="1"/>
        <end position="709"/>
    </location>
</feature>
<feature type="transmembrane region" description="Helical" evidence="1">
    <location>
        <begin position="55"/>
        <end position="75"/>
    </location>
</feature>
<feature type="transmembrane region" description="Helical" evidence="1">
    <location>
        <begin position="86"/>
        <end position="106"/>
    </location>
</feature>
<feature type="transmembrane region" description="Helical" evidence="1">
    <location>
        <begin position="236"/>
        <end position="256"/>
    </location>
</feature>
<feature type="transmembrane region" description="Helical" evidence="1">
    <location>
        <begin position="269"/>
        <end position="289"/>
    </location>
</feature>
<feature type="transmembrane region" description="Helical" evidence="1">
    <location>
        <begin position="615"/>
        <end position="635"/>
    </location>
</feature>
<feature type="transmembrane region" description="Helical" evidence="1">
    <location>
        <begin position="643"/>
        <end position="663"/>
    </location>
</feature>
<feature type="transmembrane region" description="Helical" evidence="1">
    <location>
        <begin position="688"/>
        <end position="708"/>
    </location>
</feature>
<feature type="active site" description="4-aspartylphosphate intermediate" evidence="1">
    <location>
        <position position="324"/>
    </location>
</feature>
<feature type="binding site" evidence="1">
    <location>
        <position position="361"/>
    </location>
    <ligand>
        <name>ATP</name>
        <dbReference type="ChEBI" id="CHEBI:30616"/>
    </ligand>
</feature>
<feature type="binding site" evidence="1">
    <location>
        <position position="365"/>
    </location>
    <ligand>
        <name>ATP</name>
        <dbReference type="ChEBI" id="CHEBI:30616"/>
    </ligand>
</feature>
<feature type="binding site" evidence="1">
    <location>
        <begin position="395"/>
        <end position="402"/>
    </location>
    <ligand>
        <name>ATP</name>
        <dbReference type="ChEBI" id="CHEBI:30616"/>
    </ligand>
</feature>
<feature type="binding site" evidence="1">
    <location>
        <position position="417"/>
    </location>
    <ligand>
        <name>ATP</name>
        <dbReference type="ChEBI" id="CHEBI:30616"/>
    </ligand>
</feature>
<feature type="binding site" evidence="1">
    <location>
        <position position="545"/>
    </location>
    <ligand>
        <name>Mg(2+)</name>
        <dbReference type="ChEBI" id="CHEBI:18420"/>
    </ligand>
</feature>
<feature type="binding site" evidence="1">
    <location>
        <position position="549"/>
    </location>
    <ligand>
        <name>Mg(2+)</name>
        <dbReference type="ChEBI" id="CHEBI:18420"/>
    </ligand>
</feature>